<comment type="catalytic activity">
    <reaction evidence="1">
        <text>2-(N(omega)-L-arginino)succinate = fumarate + L-arginine</text>
        <dbReference type="Rhea" id="RHEA:24020"/>
        <dbReference type="ChEBI" id="CHEBI:29806"/>
        <dbReference type="ChEBI" id="CHEBI:32682"/>
        <dbReference type="ChEBI" id="CHEBI:57472"/>
        <dbReference type="EC" id="4.3.2.1"/>
    </reaction>
</comment>
<comment type="pathway">
    <text evidence="1">Amino-acid biosynthesis; L-arginine biosynthesis; L-arginine from L-ornithine and carbamoyl phosphate: step 3/3.</text>
</comment>
<comment type="subcellular location">
    <subcellularLocation>
        <location evidence="1">Cytoplasm</location>
    </subcellularLocation>
</comment>
<comment type="similarity">
    <text evidence="1">Belongs to the lyase 1 family. Argininosuccinate lyase subfamily.</text>
</comment>
<reference key="1">
    <citation type="submission" date="2007-10" db="EMBL/GenBank/DDBJ databases">
        <title>Brucella canis ATCC 23365 whole genome shotgun sequencing project.</title>
        <authorList>
            <person name="Setubal J.C."/>
            <person name="Bowns C."/>
            <person name="Boyle S."/>
            <person name="Crasta O.R."/>
            <person name="Czar M.J."/>
            <person name="Dharmanolla C."/>
            <person name="Gillespie J.J."/>
            <person name="Kenyon R.W."/>
            <person name="Lu J."/>
            <person name="Mane S."/>
            <person name="Mohapatra S."/>
            <person name="Nagrani S."/>
            <person name="Purkayastha A."/>
            <person name="Rajasimha H.K."/>
            <person name="Shallom J.M."/>
            <person name="Shallom S."/>
            <person name="Shukla M."/>
            <person name="Snyder E.E."/>
            <person name="Sobral B.W."/>
            <person name="Wattam A.R."/>
            <person name="Will R."/>
            <person name="Williams K."/>
            <person name="Yoo H."/>
            <person name="Bruce D."/>
            <person name="Detter C."/>
            <person name="Munk C."/>
            <person name="Brettin T.S."/>
        </authorList>
    </citation>
    <scope>NUCLEOTIDE SEQUENCE [LARGE SCALE GENOMIC DNA]</scope>
    <source>
        <strain>ATCC 23365 / NCTC 10854 / RM-666</strain>
    </source>
</reference>
<organism>
    <name type="scientific">Brucella canis (strain ATCC 23365 / NCTC 10854 / RM-666)</name>
    <dbReference type="NCBI Taxonomy" id="483179"/>
    <lineage>
        <taxon>Bacteria</taxon>
        <taxon>Pseudomonadati</taxon>
        <taxon>Pseudomonadota</taxon>
        <taxon>Alphaproteobacteria</taxon>
        <taxon>Hyphomicrobiales</taxon>
        <taxon>Brucellaceae</taxon>
        <taxon>Brucella/Ochrobactrum group</taxon>
        <taxon>Brucella</taxon>
    </lineage>
</organism>
<gene>
    <name evidence="1" type="primary">argH</name>
    <name type="ordered locus">BCAN_A2026</name>
</gene>
<proteinExistence type="inferred from homology"/>
<name>ARLY_BRUC2</name>
<keyword id="KW-0028">Amino-acid biosynthesis</keyword>
<keyword id="KW-0055">Arginine biosynthesis</keyword>
<keyword id="KW-0963">Cytoplasm</keyword>
<keyword id="KW-0456">Lyase</keyword>
<keyword id="KW-1185">Reference proteome</keyword>
<accession>A9M968</accession>
<dbReference type="EC" id="4.3.2.1" evidence="1"/>
<dbReference type="EMBL" id="CP000872">
    <property type="protein sequence ID" value="ABX63015.1"/>
    <property type="molecule type" value="Genomic_DNA"/>
</dbReference>
<dbReference type="RefSeq" id="WP_004687711.1">
    <property type="nucleotide sequence ID" value="NC_010103.1"/>
</dbReference>
<dbReference type="SMR" id="A9M968"/>
<dbReference type="GeneID" id="97534742"/>
<dbReference type="KEGG" id="bcs:BCAN_A2026"/>
<dbReference type="HOGENOM" id="CLU_027272_2_3_5"/>
<dbReference type="PhylomeDB" id="A9M968"/>
<dbReference type="UniPathway" id="UPA00068">
    <property type="reaction ID" value="UER00114"/>
</dbReference>
<dbReference type="Proteomes" id="UP000001385">
    <property type="component" value="Chromosome I"/>
</dbReference>
<dbReference type="GO" id="GO:0005829">
    <property type="term" value="C:cytosol"/>
    <property type="evidence" value="ECO:0007669"/>
    <property type="project" value="TreeGrafter"/>
</dbReference>
<dbReference type="GO" id="GO:0004056">
    <property type="term" value="F:argininosuccinate lyase activity"/>
    <property type="evidence" value="ECO:0007669"/>
    <property type="project" value="UniProtKB-UniRule"/>
</dbReference>
<dbReference type="GO" id="GO:0042450">
    <property type="term" value="P:arginine biosynthetic process via ornithine"/>
    <property type="evidence" value="ECO:0007669"/>
    <property type="project" value="InterPro"/>
</dbReference>
<dbReference type="GO" id="GO:0006526">
    <property type="term" value="P:L-arginine biosynthetic process"/>
    <property type="evidence" value="ECO:0007669"/>
    <property type="project" value="UniProtKB-UniRule"/>
</dbReference>
<dbReference type="CDD" id="cd01359">
    <property type="entry name" value="Argininosuccinate_lyase"/>
    <property type="match status" value="1"/>
</dbReference>
<dbReference type="FunFam" id="1.10.275.10:FF:000002">
    <property type="entry name" value="Argininosuccinate lyase"/>
    <property type="match status" value="1"/>
</dbReference>
<dbReference type="FunFam" id="1.10.40.30:FF:000001">
    <property type="entry name" value="Argininosuccinate lyase"/>
    <property type="match status" value="1"/>
</dbReference>
<dbReference type="FunFam" id="1.20.200.10:FF:000015">
    <property type="entry name" value="argininosuccinate lyase isoform X2"/>
    <property type="match status" value="1"/>
</dbReference>
<dbReference type="Gene3D" id="1.10.40.30">
    <property type="entry name" value="Fumarase/aspartase (C-terminal domain)"/>
    <property type="match status" value="1"/>
</dbReference>
<dbReference type="Gene3D" id="1.20.200.10">
    <property type="entry name" value="Fumarase/aspartase (Central domain)"/>
    <property type="match status" value="1"/>
</dbReference>
<dbReference type="Gene3D" id="1.10.275.10">
    <property type="entry name" value="Fumarase/aspartase (N-terminal domain)"/>
    <property type="match status" value="1"/>
</dbReference>
<dbReference type="HAMAP" id="MF_00006">
    <property type="entry name" value="Arg_succ_lyase"/>
    <property type="match status" value="1"/>
</dbReference>
<dbReference type="InterPro" id="IPR029419">
    <property type="entry name" value="Arg_succ_lyase_C"/>
</dbReference>
<dbReference type="InterPro" id="IPR009049">
    <property type="entry name" value="Argininosuccinate_lyase"/>
</dbReference>
<dbReference type="InterPro" id="IPR024083">
    <property type="entry name" value="Fumarase/histidase_N"/>
</dbReference>
<dbReference type="InterPro" id="IPR020557">
    <property type="entry name" value="Fumarate_lyase_CS"/>
</dbReference>
<dbReference type="InterPro" id="IPR000362">
    <property type="entry name" value="Fumarate_lyase_fam"/>
</dbReference>
<dbReference type="InterPro" id="IPR022761">
    <property type="entry name" value="Fumarate_lyase_N"/>
</dbReference>
<dbReference type="InterPro" id="IPR008948">
    <property type="entry name" value="L-Aspartase-like"/>
</dbReference>
<dbReference type="NCBIfam" id="TIGR00838">
    <property type="entry name" value="argH"/>
    <property type="match status" value="1"/>
</dbReference>
<dbReference type="PANTHER" id="PTHR43814">
    <property type="entry name" value="ARGININOSUCCINATE LYASE"/>
    <property type="match status" value="1"/>
</dbReference>
<dbReference type="PANTHER" id="PTHR43814:SF1">
    <property type="entry name" value="ARGININOSUCCINATE LYASE"/>
    <property type="match status" value="1"/>
</dbReference>
<dbReference type="Pfam" id="PF14698">
    <property type="entry name" value="ASL_C2"/>
    <property type="match status" value="1"/>
</dbReference>
<dbReference type="Pfam" id="PF00206">
    <property type="entry name" value="Lyase_1"/>
    <property type="match status" value="1"/>
</dbReference>
<dbReference type="PRINTS" id="PR00145">
    <property type="entry name" value="ARGSUCLYASE"/>
</dbReference>
<dbReference type="PRINTS" id="PR00149">
    <property type="entry name" value="FUMRATELYASE"/>
</dbReference>
<dbReference type="SUPFAM" id="SSF48557">
    <property type="entry name" value="L-aspartase-like"/>
    <property type="match status" value="1"/>
</dbReference>
<dbReference type="PROSITE" id="PS00163">
    <property type="entry name" value="FUMARATE_LYASES"/>
    <property type="match status" value="1"/>
</dbReference>
<protein>
    <recommendedName>
        <fullName evidence="1">Argininosuccinate lyase</fullName>
        <shortName evidence="1">ASAL</shortName>
        <ecNumber evidence="1">4.3.2.1</ecNumber>
    </recommendedName>
    <alternativeName>
        <fullName evidence="1">Arginosuccinase</fullName>
    </alternativeName>
</protein>
<feature type="chain" id="PRO_1000073838" description="Argininosuccinate lyase">
    <location>
        <begin position="1"/>
        <end position="466"/>
    </location>
</feature>
<evidence type="ECO:0000255" key="1">
    <source>
        <dbReference type="HAMAP-Rule" id="MF_00006"/>
    </source>
</evidence>
<sequence length="466" mass="51285">MSEQKSSNQMWGGRFASGPDAIMEEINASIGFDRKLYAQDIQGSLAHAAMLAKTGIIAAEDHKQIENGLKTIRKEIEEGKFTFSRKLEDIHMNIEARLAELIGPAAGRLHTARSRNDQVAVDFRLWVKQELEKTAAALKNLIEAFLERAEEHAATVMPGFTHLQTAQPVTFGHHCMAYVEMFGRDLSRVRDAIERMDESPLGAAALAGTGFPIDRHMTAKALGFREPTRNSLDSVSDRDYALEFLSLAAICAGHLSRLAEEIVIWSTPQFNFVRLSDAFSTGSSIMPQKKNPDAAELVRAKTGRINGSLVALLTIMKGLPLAYSKDMQEDKEQVFDAAENLELAIAAMAGMVRDLTVNVAAMKKAAGSGYSTATDLADWLVRTLGLPFREAHHVTGRAVALAESRKVDLAKLSLEELQSINPAITAEVFGYLTVEKSVKSRQSFGGTAPQEVRRQIRYWKKRIAKA</sequence>